<name>FADA_PECCP</name>
<organism>
    <name type="scientific">Pectobacterium carotovorum subsp. carotovorum (strain PC1)</name>
    <dbReference type="NCBI Taxonomy" id="561230"/>
    <lineage>
        <taxon>Bacteria</taxon>
        <taxon>Pseudomonadati</taxon>
        <taxon>Pseudomonadota</taxon>
        <taxon>Gammaproteobacteria</taxon>
        <taxon>Enterobacterales</taxon>
        <taxon>Pectobacteriaceae</taxon>
        <taxon>Pectobacterium</taxon>
    </lineage>
</organism>
<proteinExistence type="inferred from homology"/>
<evidence type="ECO:0000255" key="1">
    <source>
        <dbReference type="HAMAP-Rule" id="MF_01620"/>
    </source>
</evidence>
<gene>
    <name evidence="1" type="primary">fadA</name>
    <name type="ordered locus">PC1_4045</name>
</gene>
<dbReference type="EC" id="2.3.1.16" evidence="1"/>
<dbReference type="EMBL" id="CP001657">
    <property type="protein sequence ID" value="ACT15060.1"/>
    <property type="molecule type" value="Genomic_DNA"/>
</dbReference>
<dbReference type="RefSeq" id="WP_015842137.1">
    <property type="nucleotide sequence ID" value="NC_012917.1"/>
</dbReference>
<dbReference type="SMR" id="C6DI66"/>
<dbReference type="STRING" id="561230.PC1_4045"/>
<dbReference type="KEGG" id="pct:PC1_4045"/>
<dbReference type="eggNOG" id="COG0183">
    <property type="taxonomic scope" value="Bacteria"/>
</dbReference>
<dbReference type="HOGENOM" id="CLU_031026_2_3_6"/>
<dbReference type="OrthoDB" id="9764638at2"/>
<dbReference type="UniPathway" id="UPA00659"/>
<dbReference type="Proteomes" id="UP000002736">
    <property type="component" value="Chromosome"/>
</dbReference>
<dbReference type="GO" id="GO:0005737">
    <property type="term" value="C:cytoplasm"/>
    <property type="evidence" value="ECO:0007669"/>
    <property type="project" value="UniProtKB-SubCell"/>
</dbReference>
<dbReference type="GO" id="GO:0003988">
    <property type="term" value="F:acetyl-CoA C-acyltransferase activity"/>
    <property type="evidence" value="ECO:0007669"/>
    <property type="project" value="UniProtKB-UniRule"/>
</dbReference>
<dbReference type="GO" id="GO:0006635">
    <property type="term" value="P:fatty acid beta-oxidation"/>
    <property type="evidence" value="ECO:0007669"/>
    <property type="project" value="UniProtKB-UniRule"/>
</dbReference>
<dbReference type="GO" id="GO:0010124">
    <property type="term" value="P:phenylacetate catabolic process"/>
    <property type="evidence" value="ECO:0007669"/>
    <property type="project" value="TreeGrafter"/>
</dbReference>
<dbReference type="CDD" id="cd00751">
    <property type="entry name" value="thiolase"/>
    <property type="match status" value="1"/>
</dbReference>
<dbReference type="FunFam" id="3.40.47.10:FF:000010">
    <property type="entry name" value="Acetyl-CoA acetyltransferase (Thiolase)"/>
    <property type="match status" value="1"/>
</dbReference>
<dbReference type="Gene3D" id="3.40.47.10">
    <property type="match status" value="2"/>
</dbReference>
<dbReference type="HAMAP" id="MF_01620">
    <property type="entry name" value="FadA"/>
    <property type="match status" value="1"/>
</dbReference>
<dbReference type="InterPro" id="IPR012805">
    <property type="entry name" value="FadA"/>
</dbReference>
<dbReference type="InterPro" id="IPR002155">
    <property type="entry name" value="Thiolase"/>
</dbReference>
<dbReference type="InterPro" id="IPR016039">
    <property type="entry name" value="Thiolase-like"/>
</dbReference>
<dbReference type="InterPro" id="IPR050215">
    <property type="entry name" value="Thiolase-like_sf_Thiolase"/>
</dbReference>
<dbReference type="InterPro" id="IPR020615">
    <property type="entry name" value="Thiolase_acyl_enz_int_AS"/>
</dbReference>
<dbReference type="InterPro" id="IPR020610">
    <property type="entry name" value="Thiolase_AS"/>
</dbReference>
<dbReference type="InterPro" id="IPR020617">
    <property type="entry name" value="Thiolase_C"/>
</dbReference>
<dbReference type="InterPro" id="IPR020613">
    <property type="entry name" value="Thiolase_CS"/>
</dbReference>
<dbReference type="InterPro" id="IPR020616">
    <property type="entry name" value="Thiolase_N"/>
</dbReference>
<dbReference type="NCBIfam" id="TIGR01930">
    <property type="entry name" value="AcCoA-C-Actrans"/>
    <property type="match status" value="1"/>
</dbReference>
<dbReference type="NCBIfam" id="TIGR02445">
    <property type="entry name" value="fadA"/>
    <property type="match status" value="1"/>
</dbReference>
<dbReference type="NCBIfam" id="NF006510">
    <property type="entry name" value="PRK08947.1"/>
    <property type="match status" value="1"/>
</dbReference>
<dbReference type="PANTHER" id="PTHR43853:SF11">
    <property type="entry name" value="3-KETOACYL-COA THIOLASE FADA"/>
    <property type="match status" value="1"/>
</dbReference>
<dbReference type="PANTHER" id="PTHR43853">
    <property type="entry name" value="3-KETOACYL-COA THIOLASE, PEROXISOMAL"/>
    <property type="match status" value="1"/>
</dbReference>
<dbReference type="Pfam" id="PF02803">
    <property type="entry name" value="Thiolase_C"/>
    <property type="match status" value="1"/>
</dbReference>
<dbReference type="Pfam" id="PF00108">
    <property type="entry name" value="Thiolase_N"/>
    <property type="match status" value="1"/>
</dbReference>
<dbReference type="PIRSF" id="PIRSF000429">
    <property type="entry name" value="Ac-CoA_Ac_transf"/>
    <property type="match status" value="1"/>
</dbReference>
<dbReference type="SUPFAM" id="SSF53901">
    <property type="entry name" value="Thiolase-like"/>
    <property type="match status" value="2"/>
</dbReference>
<dbReference type="PROSITE" id="PS00098">
    <property type="entry name" value="THIOLASE_1"/>
    <property type="match status" value="1"/>
</dbReference>
<dbReference type="PROSITE" id="PS00737">
    <property type="entry name" value="THIOLASE_2"/>
    <property type="match status" value="1"/>
</dbReference>
<dbReference type="PROSITE" id="PS00099">
    <property type="entry name" value="THIOLASE_3"/>
    <property type="match status" value="1"/>
</dbReference>
<protein>
    <recommendedName>
        <fullName evidence="1">3-ketoacyl-CoA thiolase</fullName>
        <ecNumber evidence="1">2.3.1.16</ecNumber>
    </recommendedName>
    <alternativeName>
        <fullName evidence="1">Acetyl-CoA acyltransferase</fullName>
    </alternativeName>
    <alternativeName>
        <fullName evidence="1">Beta-ketothiolase</fullName>
    </alternativeName>
    <alternativeName>
        <fullName evidence="1">Fatty acid oxidation complex subunit beta</fullName>
    </alternativeName>
</protein>
<keyword id="KW-0012">Acyltransferase</keyword>
<keyword id="KW-0963">Cytoplasm</keyword>
<keyword id="KW-0276">Fatty acid metabolism</keyword>
<keyword id="KW-0442">Lipid degradation</keyword>
<keyword id="KW-0443">Lipid metabolism</keyword>
<keyword id="KW-0808">Transferase</keyword>
<sequence length="387" mass="41029">MEKVVIVDAVRTPMGRSKGGAFRQVRAEDLSAHLMRSLLSRNAALDAREIDDIYWGCVQQTLEQGFNVARNAALLAEIPMNVPATTVNRLCGSSMQALHDAARTIMVGDADVCLIGGVEHMGHVPMNHGVDFHPGLSRTIAKAAGMMGLTAEMLGRMHNISREMQDQFAARSHQRAHHATQSGAFRHEIIPTAGHDADGALQRFDYDEVIRPDTTVDSLAALKPAFDPVNGTVTAGSSSALSDGAAAMLIMSESRAASLGLPVRARIRAMAVVGCDPSIMGYGPVPATKLALKRAGLSLSDIGLFELNEAFAAQTLPCIKDLGLLEQIDEKVNLNGGAIALGHPLGCSGARISTTLINLMESRDVQFGVATMCIGLGQGIATVFERV</sequence>
<comment type="function">
    <text evidence="1">Catalyzes the final step of fatty acid oxidation in which acetyl-CoA is released and the CoA ester of a fatty acid two carbons shorter is formed.</text>
</comment>
<comment type="catalytic activity">
    <reaction evidence="1">
        <text>an acyl-CoA + acetyl-CoA = a 3-oxoacyl-CoA + CoA</text>
        <dbReference type="Rhea" id="RHEA:21564"/>
        <dbReference type="ChEBI" id="CHEBI:57287"/>
        <dbReference type="ChEBI" id="CHEBI:57288"/>
        <dbReference type="ChEBI" id="CHEBI:58342"/>
        <dbReference type="ChEBI" id="CHEBI:90726"/>
        <dbReference type="EC" id="2.3.1.16"/>
    </reaction>
</comment>
<comment type="pathway">
    <text evidence="1">Lipid metabolism; fatty acid beta-oxidation.</text>
</comment>
<comment type="subunit">
    <text evidence="1">Heterotetramer of two alpha chains (FadB) and two beta chains (FadA).</text>
</comment>
<comment type="subcellular location">
    <subcellularLocation>
        <location evidence="1">Cytoplasm</location>
    </subcellularLocation>
</comment>
<comment type="similarity">
    <text evidence="1">Belongs to the thiolase-like superfamily. Thiolase family.</text>
</comment>
<reference key="1">
    <citation type="submission" date="2009-07" db="EMBL/GenBank/DDBJ databases">
        <title>Complete sequence of Pectobacterium carotovorum subsp. carotovorum PC1.</title>
        <authorList>
            <consortium name="US DOE Joint Genome Institute"/>
            <person name="Lucas S."/>
            <person name="Copeland A."/>
            <person name="Lapidus A."/>
            <person name="Glavina del Rio T."/>
            <person name="Tice H."/>
            <person name="Bruce D."/>
            <person name="Goodwin L."/>
            <person name="Pitluck S."/>
            <person name="Munk A.C."/>
            <person name="Brettin T."/>
            <person name="Detter J.C."/>
            <person name="Han C."/>
            <person name="Tapia R."/>
            <person name="Larimer F."/>
            <person name="Land M."/>
            <person name="Hauser L."/>
            <person name="Kyrpides N."/>
            <person name="Mikhailova N."/>
            <person name="Balakrishnan V."/>
            <person name="Glasner J."/>
            <person name="Perna N.T."/>
        </authorList>
    </citation>
    <scope>NUCLEOTIDE SEQUENCE [LARGE SCALE GENOMIC DNA]</scope>
    <source>
        <strain>PC1</strain>
    </source>
</reference>
<feature type="chain" id="PRO_1000215737" description="3-ketoacyl-CoA thiolase">
    <location>
        <begin position="1"/>
        <end position="387"/>
    </location>
</feature>
<feature type="active site" description="Acyl-thioester intermediate" evidence="1">
    <location>
        <position position="91"/>
    </location>
</feature>
<feature type="active site" description="Proton acceptor" evidence="1">
    <location>
        <position position="343"/>
    </location>
</feature>
<feature type="active site" description="Proton acceptor" evidence="1">
    <location>
        <position position="373"/>
    </location>
</feature>
<accession>C6DI66</accession>